<name>RM04_CANGA</name>
<gene>
    <name type="primary">MRPL4</name>
    <name type="ordered locus">CAGL0M00858g</name>
</gene>
<organism>
    <name type="scientific">Candida glabrata (strain ATCC 2001 / BCRC 20586 / JCM 3761 / NBRC 0622 / NRRL Y-65 / CBS 138)</name>
    <name type="common">Yeast</name>
    <name type="synonym">Nakaseomyces glabratus</name>
    <dbReference type="NCBI Taxonomy" id="284593"/>
    <lineage>
        <taxon>Eukaryota</taxon>
        <taxon>Fungi</taxon>
        <taxon>Dikarya</taxon>
        <taxon>Ascomycota</taxon>
        <taxon>Saccharomycotina</taxon>
        <taxon>Saccharomycetes</taxon>
        <taxon>Saccharomycetales</taxon>
        <taxon>Saccharomycetaceae</taxon>
        <taxon>Nakaseomyces</taxon>
    </lineage>
</organism>
<evidence type="ECO:0000250" key="1"/>
<evidence type="ECO:0000255" key="2"/>
<evidence type="ECO:0000305" key="3"/>
<feature type="transit peptide" description="Mitochondrion" evidence="2">
    <location>
        <begin position="1"/>
        <end status="unknown"/>
    </location>
</feature>
<feature type="chain" id="PRO_0000372397" description="Large ribosomal subunit protein uL29m">
    <location>
        <begin status="unknown"/>
        <end position="315"/>
    </location>
</feature>
<comment type="subunit">
    <text evidence="1">Component of the mitochondrial large ribosomal subunit. Mature mitochondrial ribosomes consist of a small (37S) and a large (54S) subunit. The 37S subunit contains at least 33 different proteins and 1 molecule of RNA (15S). The 54S subunit contains at least 45 different proteins and 1 molecule of RNA (21S) (By similarity).</text>
</comment>
<comment type="subcellular location">
    <subcellularLocation>
        <location evidence="1">Mitochondrion</location>
    </subcellularLocation>
</comment>
<comment type="similarity">
    <text evidence="3">Belongs to the universal ribosomal protein uL29 family.</text>
</comment>
<sequence>MLRRQFHSGCVQLARTRYTKPKPKNTETRAKEQIRLPTQQTHHSNELRIQPPIPPSTKNIVVPDDHPLWQFFSDKKFMRRPEDLDTTSRAWSIPELRRKSFEDLHSLWYTCLKERNILARENHLLKNAAKNNRNDYEDISEKIRTTMWRIRHVLSERDWAFKRARETFAQNKELQDNLVDDFKKEFLELDSSEDEQAFEMLTRFQEALFGIHEVIEDNVVDRKFVDGLKLVATLKLQRFQSRNDSINAILEESDGQINDVGEAFVVFTADNNLKAVEEACDAIKELRQGENGVSRFDELPTVRGYLKRLVSATTV</sequence>
<keyword id="KW-0496">Mitochondrion</keyword>
<keyword id="KW-1185">Reference proteome</keyword>
<keyword id="KW-0687">Ribonucleoprotein</keyword>
<keyword id="KW-0689">Ribosomal protein</keyword>
<keyword id="KW-0809">Transit peptide</keyword>
<reference key="1">
    <citation type="journal article" date="2004" name="Nature">
        <title>Genome evolution in yeasts.</title>
        <authorList>
            <person name="Dujon B."/>
            <person name="Sherman D."/>
            <person name="Fischer G."/>
            <person name="Durrens P."/>
            <person name="Casaregola S."/>
            <person name="Lafontaine I."/>
            <person name="de Montigny J."/>
            <person name="Marck C."/>
            <person name="Neuveglise C."/>
            <person name="Talla E."/>
            <person name="Goffard N."/>
            <person name="Frangeul L."/>
            <person name="Aigle M."/>
            <person name="Anthouard V."/>
            <person name="Babour A."/>
            <person name="Barbe V."/>
            <person name="Barnay S."/>
            <person name="Blanchin S."/>
            <person name="Beckerich J.-M."/>
            <person name="Beyne E."/>
            <person name="Bleykasten C."/>
            <person name="Boisrame A."/>
            <person name="Boyer J."/>
            <person name="Cattolico L."/>
            <person name="Confanioleri F."/>
            <person name="de Daruvar A."/>
            <person name="Despons L."/>
            <person name="Fabre E."/>
            <person name="Fairhead C."/>
            <person name="Ferry-Dumazet H."/>
            <person name="Groppi A."/>
            <person name="Hantraye F."/>
            <person name="Hennequin C."/>
            <person name="Jauniaux N."/>
            <person name="Joyet P."/>
            <person name="Kachouri R."/>
            <person name="Kerrest A."/>
            <person name="Koszul R."/>
            <person name="Lemaire M."/>
            <person name="Lesur I."/>
            <person name="Ma L."/>
            <person name="Muller H."/>
            <person name="Nicaud J.-M."/>
            <person name="Nikolski M."/>
            <person name="Oztas S."/>
            <person name="Ozier-Kalogeropoulos O."/>
            <person name="Pellenz S."/>
            <person name="Potier S."/>
            <person name="Richard G.-F."/>
            <person name="Straub M.-L."/>
            <person name="Suleau A."/>
            <person name="Swennen D."/>
            <person name="Tekaia F."/>
            <person name="Wesolowski-Louvel M."/>
            <person name="Westhof E."/>
            <person name="Wirth B."/>
            <person name="Zeniou-Meyer M."/>
            <person name="Zivanovic Y."/>
            <person name="Bolotin-Fukuhara M."/>
            <person name="Thierry A."/>
            <person name="Bouchier C."/>
            <person name="Caudron B."/>
            <person name="Scarpelli C."/>
            <person name="Gaillardin C."/>
            <person name="Weissenbach J."/>
            <person name="Wincker P."/>
            <person name="Souciet J.-L."/>
        </authorList>
    </citation>
    <scope>NUCLEOTIDE SEQUENCE [LARGE SCALE GENOMIC DNA]</scope>
    <source>
        <strain>ATCC 2001 / BCRC 20586 / JCM 3761 / NBRC 0622 / NRRL Y-65 / CBS 138</strain>
    </source>
</reference>
<accession>Q6FK61</accession>
<proteinExistence type="inferred from homology"/>
<dbReference type="EMBL" id="CR380959">
    <property type="protein sequence ID" value="CAG62359.1"/>
    <property type="molecule type" value="Genomic_DNA"/>
</dbReference>
<dbReference type="RefSeq" id="XP_449383.1">
    <property type="nucleotide sequence ID" value="XM_449383.1"/>
</dbReference>
<dbReference type="SMR" id="Q6FK61"/>
<dbReference type="FunCoup" id="Q6FK61">
    <property type="interactions" value="273"/>
</dbReference>
<dbReference type="STRING" id="284593.Q6FK61"/>
<dbReference type="EnsemblFungi" id="CAGL0M00858g-T">
    <property type="protein sequence ID" value="CAGL0M00858g-T-p1"/>
    <property type="gene ID" value="CAGL0M00858g"/>
</dbReference>
<dbReference type="GeneID" id="2891606"/>
<dbReference type="KEGG" id="cgr:2891606"/>
<dbReference type="CGD" id="CAL0136215">
    <property type="gene designation" value="MRPL4"/>
</dbReference>
<dbReference type="VEuPathDB" id="FungiDB:B1J91_M00858g"/>
<dbReference type="VEuPathDB" id="FungiDB:CAGL0M00858g"/>
<dbReference type="eggNOG" id="KOG3331">
    <property type="taxonomic scope" value="Eukaryota"/>
</dbReference>
<dbReference type="HOGENOM" id="CLU_872105_0_0_1"/>
<dbReference type="InParanoid" id="Q6FK61"/>
<dbReference type="OMA" id="IRTTMWR"/>
<dbReference type="Proteomes" id="UP000002428">
    <property type="component" value="Chromosome M"/>
</dbReference>
<dbReference type="GO" id="GO:0005762">
    <property type="term" value="C:mitochondrial large ribosomal subunit"/>
    <property type="evidence" value="ECO:0007669"/>
    <property type="project" value="TreeGrafter"/>
</dbReference>
<dbReference type="GO" id="GO:0003735">
    <property type="term" value="F:structural constituent of ribosome"/>
    <property type="evidence" value="ECO:0007669"/>
    <property type="project" value="InterPro"/>
</dbReference>
<dbReference type="GO" id="GO:0032543">
    <property type="term" value="P:mitochondrial translation"/>
    <property type="evidence" value="ECO:0007669"/>
    <property type="project" value="TreeGrafter"/>
</dbReference>
<dbReference type="Gene3D" id="6.10.140.1190">
    <property type="match status" value="1"/>
</dbReference>
<dbReference type="Gene3D" id="6.10.330.20">
    <property type="match status" value="1"/>
</dbReference>
<dbReference type="InterPro" id="IPR038340">
    <property type="entry name" value="MRP-L47_sf"/>
</dbReference>
<dbReference type="InterPro" id="IPR010729">
    <property type="entry name" value="Ribosomal_uL29_mit"/>
</dbReference>
<dbReference type="PANTHER" id="PTHR21183:SF18">
    <property type="entry name" value="LARGE RIBOSOMAL SUBUNIT PROTEIN UL29M"/>
    <property type="match status" value="1"/>
</dbReference>
<dbReference type="PANTHER" id="PTHR21183">
    <property type="entry name" value="RIBOSOMAL PROTEIN L47, MITOCHONDRIAL-RELATED"/>
    <property type="match status" value="1"/>
</dbReference>
<dbReference type="Pfam" id="PF06984">
    <property type="entry name" value="MRP-L47"/>
    <property type="match status" value="1"/>
</dbReference>
<protein>
    <recommendedName>
        <fullName evidence="3">Large ribosomal subunit protein uL29m</fullName>
    </recommendedName>
    <alternativeName>
        <fullName>54S ribosomal protein L4, mitochondrial</fullName>
    </alternativeName>
</protein>